<proteinExistence type="evidence at protein level"/>
<comment type="function">
    <text evidence="4 5">Involved in the regulation of systematic glucose homeostasis and insulin sensitivity (PubMed:27827363). Involved in the regulation of liver lipid levels by positive regulation of hepatic lipogenesis and negative regulation of fatty acid beta-oxidation; via downstream transcriptional regulation of CPT1A and hepatic lipogenic program gene expression (PubMed:21908604). May regulate hepatic lipogenesis and fatty acid beta-oxidation in an autocrine or paracrine manner (PubMed:21908604).</text>
</comment>
<comment type="subcellular location">
    <subcellularLocation>
        <location evidence="6">Secreted</location>
    </subcellularLocation>
</comment>
<comment type="tissue specificity">
    <text evidence="3 4 5">Expressed in the liver (at protein level) (PubMed:21908604, PubMed:27827363). Expressed in epididymis (PubMed:15363845).</text>
</comment>
<comment type="developmental stage">
    <text evidence="3">Expressed in the epididymis from 3 weeks of age.</text>
</comment>
<comment type="miscellaneous">
    <text evidence="4">May be involved in the development of hepatic steatosis during obesity.</text>
</comment>
<comment type="similarity">
    <text evidence="6">Belongs to the calycin superfamily. Lipocalin family.</text>
</comment>
<gene>
    <name type="primary">Obp2a</name>
    <name type="synonym">Lcn13</name>
</gene>
<feature type="signal peptide" evidence="2">
    <location>
        <begin position="1"/>
        <end position="19"/>
    </location>
</feature>
<feature type="chain" id="PRO_0000017924" description="Odorant-binding protein 2a">
    <location>
        <begin position="20"/>
        <end position="176"/>
    </location>
</feature>
<feature type="glycosylation site" description="N-linked (GlcNAc...) asparagine" evidence="2">
    <location>
        <position position="42"/>
    </location>
</feature>
<feature type="glycosylation site" description="N-linked (GlcNAc...) asparagine" evidence="2">
    <location>
        <position position="124"/>
    </location>
</feature>
<feature type="disulfide bond" evidence="1">
    <location>
        <begin position="79"/>
        <end position="172"/>
    </location>
</feature>
<keyword id="KW-1015">Disulfide bond</keyword>
<keyword id="KW-0325">Glycoprotein</keyword>
<keyword id="KW-1185">Reference proteome</keyword>
<keyword id="KW-0964">Secreted</keyword>
<keyword id="KW-0732">Signal</keyword>
<keyword id="KW-0813">Transport</keyword>
<name>OBP2A_MOUSE</name>
<accession>Q8K1H9</accession>
<reference key="1">
    <citation type="journal article" date="2004" name="Gene">
        <title>Molecular evolution of epididymal lipocalin genes localized on mouse chromosome 2.</title>
        <authorList>
            <person name="Suzuki K."/>
            <person name="Lareyre J.-J."/>
            <person name="Sanchez D."/>
            <person name="Gutierrez G."/>
            <person name="Araki Y."/>
            <person name="Matusik R.J."/>
            <person name="Orgebin-Crist M.-C."/>
        </authorList>
    </citation>
    <scope>NUCLEOTIDE SEQUENCE [MRNA]</scope>
    <scope>TISSUE SPECIFICITY</scope>
    <scope>DEVELOPMENTAL STAGE</scope>
    <source>
        <strain>C57BL/6 X DBA/2</strain>
        <tissue>Epididymis</tissue>
    </source>
</reference>
<reference key="2">
    <citation type="journal article" date="2004" name="Genome Res.">
        <title>The status, quality, and expansion of the NIH full-length cDNA project: the Mammalian Gene Collection (MGC).</title>
        <authorList>
            <consortium name="The MGC Project Team"/>
        </authorList>
    </citation>
    <scope>NUCLEOTIDE SEQUENCE [LARGE SCALE MRNA]</scope>
    <source>
        <tissue>Uterus</tissue>
    </source>
</reference>
<reference key="3">
    <citation type="journal article" date="2011" name="J. Biol. Chem.">
        <title>Lipocalin 13 protein protects against hepatic steatosis by both inhibiting lipogenesis and stimulating fatty acid beta-oxidation.</title>
        <authorList>
            <person name="Sheng L."/>
            <person name="Cho K.W."/>
            <person name="Zhou Y."/>
            <person name="Shen H."/>
            <person name="Rui L."/>
        </authorList>
    </citation>
    <scope>FUNCTION</scope>
    <scope>TISSUE SPECIFICITY</scope>
</reference>
<reference key="4">
    <citation type="journal article" date="2016" name="Nat. Commun.">
        <title>Control of diabetic hyperglycaemia and insulin resistance through TSC22D4.</title>
        <authorList>
            <person name="Ekim Uestuenel B."/>
            <person name="Friedrich K."/>
            <person name="Maida A."/>
            <person name="Wang X."/>
            <person name="Krones-Herzig A."/>
            <person name="Seibert O."/>
            <person name="Sommerfeld A."/>
            <person name="Jones A."/>
            <person name="Sijmonsma T.P."/>
            <person name="Sticht C."/>
            <person name="Gretz N."/>
            <person name="Fleming T."/>
            <person name="Nawroth P.P."/>
            <person name="Stremmel W."/>
            <person name="Rose A.J."/>
            <person name="Berriel-Diaz M."/>
            <person name="Blueher M."/>
            <person name="Herzig S."/>
        </authorList>
    </citation>
    <scope>FUNCTION</scope>
    <scope>TISSUE SPECIFICITY</scope>
</reference>
<protein>
    <recommendedName>
        <fullName>Odorant-binding protein 2a</fullName>
    </recommendedName>
    <alternativeName>
        <fullName>Epididymal-specific lipocalin-13</fullName>
    </alternativeName>
</protein>
<dbReference type="EMBL" id="BC027556">
    <property type="protein sequence ID" value="AAH27556.1"/>
    <property type="molecule type" value="mRNA"/>
</dbReference>
<dbReference type="EMBL" id="AY360148">
    <property type="protein sequence ID" value="AAR11375.1"/>
    <property type="molecule type" value="mRNA"/>
</dbReference>
<dbReference type="CCDS" id="CCDS15788.1"/>
<dbReference type="RefSeq" id="NP_705786.1">
    <property type="nucleotide sequence ID" value="NM_153558.1"/>
</dbReference>
<dbReference type="SMR" id="Q8K1H9"/>
<dbReference type="BioGRID" id="230649">
    <property type="interactions" value="4"/>
</dbReference>
<dbReference type="FunCoup" id="Q8K1H9">
    <property type="interactions" value="256"/>
</dbReference>
<dbReference type="STRING" id="10090.ENSMUSP00000076851"/>
<dbReference type="GlyCosmos" id="Q8K1H9">
    <property type="glycosylation" value="2 sites, No reported glycans"/>
</dbReference>
<dbReference type="GlyGen" id="Q8K1H9">
    <property type="glycosylation" value="2 sites, 2 N-linked glycans (2 sites)"/>
</dbReference>
<dbReference type="iPTMnet" id="Q8K1H9"/>
<dbReference type="PhosphoSitePlus" id="Q8K1H9"/>
<dbReference type="PaxDb" id="10090-ENSMUSP00000076851"/>
<dbReference type="ProteomicsDB" id="293824"/>
<dbReference type="DNASU" id="227627"/>
<dbReference type="Ensembl" id="ENSMUST00000077667.4">
    <property type="protein sequence ID" value="ENSMUSP00000076851.4"/>
    <property type="gene ID" value="ENSMUSG00000062061.4"/>
</dbReference>
<dbReference type="GeneID" id="227627"/>
<dbReference type="KEGG" id="mmu:227627"/>
<dbReference type="UCSC" id="uc008itf.1">
    <property type="organism name" value="mouse"/>
</dbReference>
<dbReference type="AGR" id="MGI:2387617"/>
<dbReference type="CTD" id="29991"/>
<dbReference type="MGI" id="MGI:2387617">
    <property type="gene designation" value="Obp2a"/>
</dbReference>
<dbReference type="VEuPathDB" id="HostDB:ENSMUSG00000062061"/>
<dbReference type="eggNOG" id="ENOG502S22P">
    <property type="taxonomic scope" value="Eukaryota"/>
</dbReference>
<dbReference type="GeneTree" id="ENSGT01050000244868"/>
<dbReference type="HOGENOM" id="CLU_125034_0_0_1"/>
<dbReference type="InParanoid" id="Q8K1H9"/>
<dbReference type="OMA" id="WYIKAMV"/>
<dbReference type="OrthoDB" id="9621919at2759"/>
<dbReference type="PhylomeDB" id="Q8K1H9"/>
<dbReference type="TreeFam" id="TF338197"/>
<dbReference type="BioGRID-ORCS" id="227627">
    <property type="hits" value="2 hits in 78 CRISPR screens"/>
</dbReference>
<dbReference type="PRO" id="PR:Q8K1H9"/>
<dbReference type="Proteomes" id="UP000000589">
    <property type="component" value="Chromosome 2"/>
</dbReference>
<dbReference type="RNAct" id="Q8K1H9">
    <property type="molecule type" value="protein"/>
</dbReference>
<dbReference type="Bgee" id="ENSMUSG00000062061">
    <property type="expression patterns" value="Expressed in olfactory epithelium and 13 other cell types or tissues"/>
</dbReference>
<dbReference type="GO" id="GO:0005615">
    <property type="term" value="C:extracellular space"/>
    <property type="evidence" value="ECO:0000314"/>
    <property type="project" value="MGI"/>
</dbReference>
<dbReference type="GO" id="GO:0036094">
    <property type="term" value="F:small molecule binding"/>
    <property type="evidence" value="ECO:0007669"/>
    <property type="project" value="InterPro"/>
</dbReference>
<dbReference type="GO" id="GO:0042593">
    <property type="term" value="P:glucose homeostasis"/>
    <property type="evidence" value="ECO:0000314"/>
    <property type="project" value="MGI"/>
</dbReference>
<dbReference type="GO" id="GO:0008286">
    <property type="term" value="P:insulin receptor signaling pathway"/>
    <property type="evidence" value="ECO:0000315"/>
    <property type="project" value="MGI"/>
</dbReference>
<dbReference type="GO" id="GO:0045721">
    <property type="term" value="P:negative regulation of gluconeogenesis"/>
    <property type="evidence" value="ECO:0000315"/>
    <property type="project" value="MGI"/>
</dbReference>
<dbReference type="GO" id="GO:0051055">
    <property type="term" value="P:negative regulation of lipid biosynthetic process"/>
    <property type="evidence" value="ECO:0000314"/>
    <property type="project" value="MGI"/>
</dbReference>
<dbReference type="GO" id="GO:0032000">
    <property type="term" value="P:positive regulation of fatty acid beta-oxidation"/>
    <property type="evidence" value="ECO:0000314"/>
    <property type="project" value="MGI"/>
</dbReference>
<dbReference type="GO" id="GO:0010906">
    <property type="term" value="P:regulation of glucose metabolic process"/>
    <property type="evidence" value="ECO:0000315"/>
    <property type="project" value="MGI"/>
</dbReference>
<dbReference type="CDD" id="cd19414">
    <property type="entry name" value="lipocalin_1_3_4_13-like"/>
    <property type="match status" value="1"/>
</dbReference>
<dbReference type="Gene3D" id="2.40.128.20">
    <property type="match status" value="1"/>
</dbReference>
<dbReference type="InterPro" id="IPR012674">
    <property type="entry name" value="Calycin"/>
</dbReference>
<dbReference type="InterPro" id="IPR002345">
    <property type="entry name" value="Lipocalin"/>
</dbReference>
<dbReference type="InterPro" id="IPR000566">
    <property type="entry name" value="Lipocln_cytosolic_FA-bd_dom"/>
</dbReference>
<dbReference type="InterPro" id="IPR002450">
    <property type="entry name" value="von_Ebner_gland"/>
</dbReference>
<dbReference type="PANTHER" id="PTHR11430">
    <property type="entry name" value="LIPOCALIN"/>
    <property type="match status" value="1"/>
</dbReference>
<dbReference type="PANTHER" id="PTHR11430:SF137">
    <property type="entry name" value="ODORANT-BINDING PROTEIN 2A"/>
    <property type="match status" value="1"/>
</dbReference>
<dbReference type="Pfam" id="PF00061">
    <property type="entry name" value="Lipocalin"/>
    <property type="match status" value="1"/>
</dbReference>
<dbReference type="PRINTS" id="PR01175">
    <property type="entry name" value="VNEBNERGLAND"/>
</dbReference>
<dbReference type="SUPFAM" id="SSF50814">
    <property type="entry name" value="Lipocalins"/>
    <property type="match status" value="1"/>
</dbReference>
<organism>
    <name type="scientific">Mus musculus</name>
    <name type="common">Mouse</name>
    <dbReference type="NCBI Taxonomy" id="10090"/>
    <lineage>
        <taxon>Eukaryota</taxon>
        <taxon>Metazoa</taxon>
        <taxon>Chordata</taxon>
        <taxon>Craniata</taxon>
        <taxon>Vertebrata</taxon>
        <taxon>Euteleostomi</taxon>
        <taxon>Mammalia</taxon>
        <taxon>Eutheria</taxon>
        <taxon>Euarchontoglires</taxon>
        <taxon>Glires</taxon>
        <taxon>Rodentia</taxon>
        <taxon>Myomorpha</taxon>
        <taxon>Muroidea</taxon>
        <taxon>Muridae</taxon>
        <taxon>Murinae</taxon>
        <taxon>Mus</taxon>
        <taxon>Mus</taxon>
    </lineage>
</organism>
<evidence type="ECO:0000250" key="1"/>
<evidence type="ECO:0000255" key="2"/>
<evidence type="ECO:0000269" key="3">
    <source>
    </source>
</evidence>
<evidence type="ECO:0000269" key="4">
    <source>
    </source>
</evidence>
<evidence type="ECO:0000269" key="5">
    <source>
    </source>
</evidence>
<evidence type="ECO:0000305" key="6"/>
<sequence>MKSLLLTILLLGLVAVLKAQEAPPDDLVDYSGIWYAKAMVHNGTLPSHKIPSIVFPVRIIALEEGDLETTVVFWNNGHCREFKFVMKKTEEPGKYTAFHNTKVIHVEKTSVNEHYIFYCEGRHNGTSSFGMGKLMGRDSGENPEAMEEFKNFIKRMNLRLENMFVPEIGDKCVESD</sequence>